<gene>
    <name evidence="1" type="primary">panD</name>
    <name type="ordered locus">CJE0341</name>
</gene>
<keyword id="KW-0068">Autocatalytic cleavage</keyword>
<keyword id="KW-0963">Cytoplasm</keyword>
<keyword id="KW-0210">Decarboxylase</keyword>
<keyword id="KW-0456">Lyase</keyword>
<keyword id="KW-0566">Pantothenate biosynthesis</keyword>
<keyword id="KW-0670">Pyruvate</keyword>
<keyword id="KW-0704">Schiff base</keyword>
<keyword id="KW-0865">Zymogen</keyword>
<comment type="function">
    <text evidence="1">Catalyzes the pyruvoyl-dependent decarboxylation of aspartate to produce beta-alanine.</text>
</comment>
<comment type="catalytic activity">
    <reaction evidence="1">
        <text>L-aspartate + H(+) = beta-alanine + CO2</text>
        <dbReference type="Rhea" id="RHEA:19497"/>
        <dbReference type="ChEBI" id="CHEBI:15378"/>
        <dbReference type="ChEBI" id="CHEBI:16526"/>
        <dbReference type="ChEBI" id="CHEBI:29991"/>
        <dbReference type="ChEBI" id="CHEBI:57966"/>
        <dbReference type="EC" id="4.1.1.11"/>
    </reaction>
</comment>
<comment type="cofactor">
    <cofactor evidence="1">
        <name>pyruvate</name>
        <dbReference type="ChEBI" id="CHEBI:15361"/>
    </cofactor>
    <text evidence="1">Binds 1 pyruvoyl group covalently per subunit.</text>
</comment>
<comment type="pathway">
    <text evidence="1">Cofactor biosynthesis; (R)-pantothenate biosynthesis; beta-alanine from L-aspartate: step 1/1.</text>
</comment>
<comment type="subunit">
    <text evidence="1">Heterooctamer of four alpha and four beta subunits.</text>
</comment>
<comment type="subcellular location">
    <subcellularLocation>
        <location evidence="1">Cytoplasm</location>
    </subcellularLocation>
</comment>
<comment type="PTM">
    <text evidence="1">Is synthesized initially as an inactive proenzyme, which is activated by self-cleavage at a specific serine bond to produce a beta-subunit with a hydroxyl group at its C-terminus and an alpha-subunit with a pyruvoyl group at its N-terminus.</text>
</comment>
<comment type="similarity">
    <text evidence="1">Belongs to the PanD family.</text>
</comment>
<accession>Q5HWH5</accession>
<protein>
    <recommendedName>
        <fullName evidence="1">Aspartate 1-decarboxylase</fullName>
        <ecNumber evidence="1">4.1.1.11</ecNumber>
    </recommendedName>
    <alternativeName>
        <fullName evidence="1">Aspartate alpha-decarboxylase</fullName>
    </alternativeName>
    <component>
        <recommendedName>
            <fullName evidence="1">Aspartate 1-decarboxylase beta chain</fullName>
        </recommendedName>
    </component>
    <component>
        <recommendedName>
            <fullName evidence="1">Aspartate 1-decarboxylase alpha chain</fullName>
        </recommendedName>
    </component>
</protein>
<feature type="chain" id="PRO_0000023055" description="Aspartate 1-decarboxylase beta chain" evidence="1">
    <location>
        <begin position="1"/>
        <end position="24"/>
    </location>
</feature>
<feature type="chain" id="PRO_0000023056" description="Aspartate 1-decarboxylase alpha chain" evidence="1">
    <location>
        <begin position="25"/>
        <end position="126"/>
    </location>
</feature>
<feature type="active site" description="Schiff-base intermediate with substrate; via pyruvic acid" evidence="1">
    <location>
        <position position="25"/>
    </location>
</feature>
<feature type="active site" description="Proton donor" evidence="1">
    <location>
        <position position="58"/>
    </location>
</feature>
<feature type="binding site" evidence="1">
    <location>
        <position position="57"/>
    </location>
    <ligand>
        <name>substrate</name>
    </ligand>
</feature>
<feature type="binding site" evidence="1">
    <location>
        <begin position="72"/>
        <end position="74"/>
    </location>
    <ligand>
        <name>substrate</name>
    </ligand>
</feature>
<feature type="modified residue" description="Pyruvic acid (Ser)" evidence="1">
    <location>
        <position position="25"/>
    </location>
</feature>
<proteinExistence type="inferred from homology"/>
<organism>
    <name type="scientific">Campylobacter jejuni (strain RM1221)</name>
    <dbReference type="NCBI Taxonomy" id="195099"/>
    <lineage>
        <taxon>Bacteria</taxon>
        <taxon>Pseudomonadati</taxon>
        <taxon>Campylobacterota</taxon>
        <taxon>Epsilonproteobacteria</taxon>
        <taxon>Campylobacterales</taxon>
        <taxon>Campylobacteraceae</taxon>
        <taxon>Campylobacter</taxon>
    </lineage>
</organism>
<dbReference type="EC" id="4.1.1.11" evidence="1"/>
<dbReference type="EMBL" id="CP000025">
    <property type="protein sequence ID" value="AAW34930.1"/>
    <property type="molecule type" value="Genomic_DNA"/>
</dbReference>
<dbReference type="RefSeq" id="WP_002854245.1">
    <property type="nucleotide sequence ID" value="NC_003912.7"/>
</dbReference>
<dbReference type="SMR" id="Q5HWH5"/>
<dbReference type="KEGG" id="cjr:CJE0341"/>
<dbReference type="HOGENOM" id="CLU_115305_2_0_7"/>
<dbReference type="UniPathway" id="UPA00028">
    <property type="reaction ID" value="UER00002"/>
</dbReference>
<dbReference type="GO" id="GO:0005829">
    <property type="term" value="C:cytosol"/>
    <property type="evidence" value="ECO:0007669"/>
    <property type="project" value="TreeGrafter"/>
</dbReference>
<dbReference type="GO" id="GO:0004068">
    <property type="term" value="F:aspartate 1-decarboxylase activity"/>
    <property type="evidence" value="ECO:0007669"/>
    <property type="project" value="UniProtKB-UniRule"/>
</dbReference>
<dbReference type="GO" id="GO:0006523">
    <property type="term" value="P:alanine biosynthetic process"/>
    <property type="evidence" value="ECO:0007669"/>
    <property type="project" value="InterPro"/>
</dbReference>
<dbReference type="GO" id="GO:0015940">
    <property type="term" value="P:pantothenate biosynthetic process"/>
    <property type="evidence" value="ECO:0007669"/>
    <property type="project" value="UniProtKB-UniRule"/>
</dbReference>
<dbReference type="CDD" id="cd06919">
    <property type="entry name" value="Asp_decarbox"/>
    <property type="match status" value="1"/>
</dbReference>
<dbReference type="Gene3D" id="2.40.40.20">
    <property type="match status" value="1"/>
</dbReference>
<dbReference type="HAMAP" id="MF_00446">
    <property type="entry name" value="PanD"/>
    <property type="match status" value="1"/>
</dbReference>
<dbReference type="InterPro" id="IPR009010">
    <property type="entry name" value="Asp_de-COase-like_dom_sf"/>
</dbReference>
<dbReference type="InterPro" id="IPR003190">
    <property type="entry name" value="Asp_decarbox"/>
</dbReference>
<dbReference type="NCBIfam" id="TIGR00223">
    <property type="entry name" value="panD"/>
    <property type="match status" value="1"/>
</dbReference>
<dbReference type="PANTHER" id="PTHR21012">
    <property type="entry name" value="ASPARTATE 1-DECARBOXYLASE"/>
    <property type="match status" value="1"/>
</dbReference>
<dbReference type="PANTHER" id="PTHR21012:SF0">
    <property type="entry name" value="ASPARTATE 1-DECARBOXYLASE"/>
    <property type="match status" value="1"/>
</dbReference>
<dbReference type="Pfam" id="PF02261">
    <property type="entry name" value="Asp_decarbox"/>
    <property type="match status" value="1"/>
</dbReference>
<dbReference type="PIRSF" id="PIRSF006246">
    <property type="entry name" value="Asp_decarbox"/>
    <property type="match status" value="1"/>
</dbReference>
<dbReference type="SUPFAM" id="SSF50692">
    <property type="entry name" value="ADC-like"/>
    <property type="match status" value="1"/>
</dbReference>
<sequence length="126" mass="13987">MNITLLKSKIHRANVTEARLDYVGSISIDEKLLQASGILEYEKVQVVNVNNGARFETYTIATQEEGVVCLNGAAARLAEVGDKVIIMSYADFNEEEAKTFKPKVVFVDENNTATKITNYEKHGAIF</sequence>
<name>PAND_CAMJR</name>
<evidence type="ECO:0000255" key="1">
    <source>
        <dbReference type="HAMAP-Rule" id="MF_00446"/>
    </source>
</evidence>
<reference key="1">
    <citation type="journal article" date="2005" name="PLoS Biol.">
        <title>Major structural differences and novel potential virulence mechanisms from the genomes of multiple Campylobacter species.</title>
        <authorList>
            <person name="Fouts D.E."/>
            <person name="Mongodin E.F."/>
            <person name="Mandrell R.E."/>
            <person name="Miller W.G."/>
            <person name="Rasko D.A."/>
            <person name="Ravel J."/>
            <person name="Brinkac L.M."/>
            <person name="DeBoy R.T."/>
            <person name="Parker C.T."/>
            <person name="Daugherty S.C."/>
            <person name="Dodson R.J."/>
            <person name="Durkin A.S."/>
            <person name="Madupu R."/>
            <person name="Sullivan S.A."/>
            <person name="Shetty J.U."/>
            <person name="Ayodeji M.A."/>
            <person name="Shvartsbeyn A."/>
            <person name="Schatz M.C."/>
            <person name="Badger J.H."/>
            <person name="Fraser C.M."/>
            <person name="Nelson K.E."/>
        </authorList>
    </citation>
    <scope>NUCLEOTIDE SEQUENCE [LARGE SCALE GENOMIC DNA]</scope>
    <source>
        <strain>RM1221</strain>
    </source>
</reference>